<name>KTHY_ALISL</name>
<reference key="1">
    <citation type="journal article" date="2008" name="BMC Genomics">
        <title>The genome sequence of the fish pathogen Aliivibrio salmonicida strain LFI1238 shows extensive evidence of gene decay.</title>
        <authorList>
            <person name="Hjerde E."/>
            <person name="Lorentzen M.S."/>
            <person name="Holden M.T."/>
            <person name="Seeger K."/>
            <person name="Paulsen S."/>
            <person name="Bason N."/>
            <person name="Churcher C."/>
            <person name="Harris D."/>
            <person name="Norbertczak H."/>
            <person name="Quail M.A."/>
            <person name="Sanders S."/>
            <person name="Thurston S."/>
            <person name="Parkhill J."/>
            <person name="Willassen N.P."/>
            <person name="Thomson N.R."/>
        </authorList>
    </citation>
    <scope>NUCLEOTIDE SEQUENCE [LARGE SCALE GENOMIC DNA]</scope>
    <source>
        <strain>LFI1238</strain>
    </source>
</reference>
<comment type="function">
    <text evidence="1">Phosphorylation of dTMP to form dTDP in both de novo and salvage pathways of dTTP synthesis.</text>
</comment>
<comment type="catalytic activity">
    <reaction evidence="1">
        <text>dTMP + ATP = dTDP + ADP</text>
        <dbReference type="Rhea" id="RHEA:13517"/>
        <dbReference type="ChEBI" id="CHEBI:30616"/>
        <dbReference type="ChEBI" id="CHEBI:58369"/>
        <dbReference type="ChEBI" id="CHEBI:63528"/>
        <dbReference type="ChEBI" id="CHEBI:456216"/>
        <dbReference type="EC" id="2.7.4.9"/>
    </reaction>
</comment>
<comment type="similarity">
    <text evidence="1">Belongs to the thymidylate kinase family.</text>
</comment>
<evidence type="ECO:0000255" key="1">
    <source>
        <dbReference type="HAMAP-Rule" id="MF_00165"/>
    </source>
</evidence>
<protein>
    <recommendedName>
        <fullName evidence="1">Thymidylate kinase</fullName>
        <ecNumber evidence="1">2.7.4.9</ecNumber>
    </recommendedName>
    <alternativeName>
        <fullName evidence="1">dTMP kinase</fullName>
    </alternativeName>
</protein>
<feature type="chain" id="PRO_1000097373" description="Thymidylate kinase">
    <location>
        <begin position="1"/>
        <end position="210"/>
    </location>
</feature>
<feature type="binding site" evidence="1">
    <location>
        <begin position="9"/>
        <end position="16"/>
    </location>
    <ligand>
        <name>ATP</name>
        <dbReference type="ChEBI" id="CHEBI:30616"/>
    </ligand>
</feature>
<gene>
    <name evidence="1" type="primary">tmk</name>
    <name type="ordered locus">VSAL_I2245</name>
</gene>
<proteinExistence type="inferred from homology"/>
<organism>
    <name type="scientific">Aliivibrio salmonicida (strain LFI1238)</name>
    <name type="common">Vibrio salmonicida (strain LFI1238)</name>
    <dbReference type="NCBI Taxonomy" id="316275"/>
    <lineage>
        <taxon>Bacteria</taxon>
        <taxon>Pseudomonadati</taxon>
        <taxon>Pseudomonadota</taxon>
        <taxon>Gammaproteobacteria</taxon>
        <taxon>Vibrionales</taxon>
        <taxon>Vibrionaceae</taxon>
        <taxon>Aliivibrio</taxon>
    </lineage>
</organism>
<dbReference type="EC" id="2.7.4.9" evidence="1"/>
<dbReference type="EMBL" id="FM178379">
    <property type="protein sequence ID" value="CAQ79929.1"/>
    <property type="molecule type" value="Genomic_DNA"/>
</dbReference>
<dbReference type="RefSeq" id="WP_012550759.1">
    <property type="nucleotide sequence ID" value="NC_011312.1"/>
</dbReference>
<dbReference type="SMR" id="B6EJ04"/>
<dbReference type="KEGG" id="vsa:VSAL_I2245"/>
<dbReference type="eggNOG" id="COG0125">
    <property type="taxonomic scope" value="Bacteria"/>
</dbReference>
<dbReference type="HOGENOM" id="CLU_049131_0_1_6"/>
<dbReference type="Proteomes" id="UP000001730">
    <property type="component" value="Chromosome 1"/>
</dbReference>
<dbReference type="GO" id="GO:0005829">
    <property type="term" value="C:cytosol"/>
    <property type="evidence" value="ECO:0007669"/>
    <property type="project" value="TreeGrafter"/>
</dbReference>
<dbReference type="GO" id="GO:0005524">
    <property type="term" value="F:ATP binding"/>
    <property type="evidence" value="ECO:0007669"/>
    <property type="project" value="UniProtKB-UniRule"/>
</dbReference>
<dbReference type="GO" id="GO:0004798">
    <property type="term" value="F:dTMP kinase activity"/>
    <property type="evidence" value="ECO:0007669"/>
    <property type="project" value="UniProtKB-UniRule"/>
</dbReference>
<dbReference type="GO" id="GO:0006233">
    <property type="term" value="P:dTDP biosynthetic process"/>
    <property type="evidence" value="ECO:0007669"/>
    <property type="project" value="InterPro"/>
</dbReference>
<dbReference type="GO" id="GO:0006235">
    <property type="term" value="P:dTTP biosynthetic process"/>
    <property type="evidence" value="ECO:0007669"/>
    <property type="project" value="UniProtKB-UniRule"/>
</dbReference>
<dbReference type="GO" id="GO:0006227">
    <property type="term" value="P:dUDP biosynthetic process"/>
    <property type="evidence" value="ECO:0007669"/>
    <property type="project" value="TreeGrafter"/>
</dbReference>
<dbReference type="CDD" id="cd01672">
    <property type="entry name" value="TMPK"/>
    <property type="match status" value="1"/>
</dbReference>
<dbReference type="FunFam" id="3.40.50.300:FF:000321">
    <property type="entry name" value="Thymidylate kinase"/>
    <property type="match status" value="1"/>
</dbReference>
<dbReference type="Gene3D" id="3.40.50.300">
    <property type="entry name" value="P-loop containing nucleotide triphosphate hydrolases"/>
    <property type="match status" value="1"/>
</dbReference>
<dbReference type="HAMAP" id="MF_00165">
    <property type="entry name" value="Thymidylate_kinase"/>
    <property type="match status" value="1"/>
</dbReference>
<dbReference type="InterPro" id="IPR027417">
    <property type="entry name" value="P-loop_NTPase"/>
</dbReference>
<dbReference type="InterPro" id="IPR039430">
    <property type="entry name" value="Thymidylate_kin-like_dom"/>
</dbReference>
<dbReference type="InterPro" id="IPR018095">
    <property type="entry name" value="Thymidylate_kin_CS"/>
</dbReference>
<dbReference type="InterPro" id="IPR018094">
    <property type="entry name" value="Thymidylate_kinase"/>
</dbReference>
<dbReference type="NCBIfam" id="TIGR00041">
    <property type="entry name" value="DTMP_kinase"/>
    <property type="match status" value="1"/>
</dbReference>
<dbReference type="PANTHER" id="PTHR10344">
    <property type="entry name" value="THYMIDYLATE KINASE"/>
    <property type="match status" value="1"/>
</dbReference>
<dbReference type="PANTHER" id="PTHR10344:SF4">
    <property type="entry name" value="UMP-CMP KINASE 2, MITOCHONDRIAL"/>
    <property type="match status" value="1"/>
</dbReference>
<dbReference type="Pfam" id="PF02223">
    <property type="entry name" value="Thymidylate_kin"/>
    <property type="match status" value="1"/>
</dbReference>
<dbReference type="SUPFAM" id="SSF52540">
    <property type="entry name" value="P-loop containing nucleoside triphosphate hydrolases"/>
    <property type="match status" value="1"/>
</dbReference>
<dbReference type="PROSITE" id="PS01331">
    <property type="entry name" value="THYMIDYLATE_KINASE"/>
    <property type="match status" value="1"/>
</dbReference>
<keyword id="KW-0067">ATP-binding</keyword>
<keyword id="KW-0418">Kinase</keyword>
<keyword id="KW-0545">Nucleotide biosynthesis</keyword>
<keyword id="KW-0547">Nucleotide-binding</keyword>
<keyword id="KW-0808">Transferase</keyword>
<sequence length="210" mass="22927">MSKFIVIEGLEGAGKSTAIKNVLATLAKHGITAPVTTREPGGTPLAEKMRELVKQGHPDEPLTDMAELLLLYAARAQLVGNVIKPALAAGNWVVGDRHDLSSQAYQGGGRGFDRELMATMKRTVLGDFTPDLTIYMDIDPKLGLQRASARGELDRIEQMKLDFFERSRERYLEFANNDESIITIDAGQDLDTVTASIIAALEIWLATNGN</sequence>
<accession>B6EJ04</accession>